<organism>
    <name type="scientific">Alkalilimnicola ehrlichii (strain ATCC BAA-1101 / DSM 17681 / MLHE-1)</name>
    <dbReference type="NCBI Taxonomy" id="187272"/>
    <lineage>
        <taxon>Bacteria</taxon>
        <taxon>Pseudomonadati</taxon>
        <taxon>Pseudomonadota</taxon>
        <taxon>Gammaproteobacteria</taxon>
        <taxon>Chromatiales</taxon>
        <taxon>Ectothiorhodospiraceae</taxon>
        <taxon>Alkalilimnicola</taxon>
    </lineage>
</organism>
<comment type="function">
    <text evidence="1">Catalyzes the 2-thiolation of uridine at the wobble position (U34) of tRNA, leading to the formation of s(2)U34.</text>
</comment>
<comment type="catalytic activity">
    <reaction evidence="1">
        <text>S-sulfanyl-L-cysteinyl-[protein] + uridine(34) in tRNA + AH2 + ATP = 2-thiouridine(34) in tRNA + L-cysteinyl-[protein] + A + AMP + diphosphate + H(+)</text>
        <dbReference type="Rhea" id="RHEA:47032"/>
        <dbReference type="Rhea" id="RHEA-COMP:10131"/>
        <dbReference type="Rhea" id="RHEA-COMP:11726"/>
        <dbReference type="Rhea" id="RHEA-COMP:11727"/>
        <dbReference type="Rhea" id="RHEA-COMP:11728"/>
        <dbReference type="ChEBI" id="CHEBI:13193"/>
        <dbReference type="ChEBI" id="CHEBI:15378"/>
        <dbReference type="ChEBI" id="CHEBI:17499"/>
        <dbReference type="ChEBI" id="CHEBI:29950"/>
        <dbReference type="ChEBI" id="CHEBI:30616"/>
        <dbReference type="ChEBI" id="CHEBI:33019"/>
        <dbReference type="ChEBI" id="CHEBI:61963"/>
        <dbReference type="ChEBI" id="CHEBI:65315"/>
        <dbReference type="ChEBI" id="CHEBI:87170"/>
        <dbReference type="ChEBI" id="CHEBI:456215"/>
        <dbReference type="EC" id="2.8.1.13"/>
    </reaction>
</comment>
<comment type="subcellular location">
    <subcellularLocation>
        <location evidence="1">Cytoplasm</location>
    </subcellularLocation>
</comment>
<comment type="similarity">
    <text evidence="1">Belongs to the MnmA/TRMU family.</text>
</comment>
<keyword id="KW-0067">ATP-binding</keyword>
<keyword id="KW-0963">Cytoplasm</keyword>
<keyword id="KW-1015">Disulfide bond</keyword>
<keyword id="KW-0547">Nucleotide-binding</keyword>
<keyword id="KW-1185">Reference proteome</keyword>
<keyword id="KW-0694">RNA-binding</keyword>
<keyword id="KW-0808">Transferase</keyword>
<keyword id="KW-0819">tRNA processing</keyword>
<keyword id="KW-0820">tRNA-binding</keyword>
<dbReference type="EC" id="2.8.1.13" evidence="1"/>
<dbReference type="EMBL" id="CP000453">
    <property type="protein sequence ID" value="ABI56800.1"/>
    <property type="molecule type" value="Genomic_DNA"/>
</dbReference>
<dbReference type="RefSeq" id="WP_011629195.1">
    <property type="nucleotide sequence ID" value="NC_008340.1"/>
</dbReference>
<dbReference type="SMR" id="Q0A8N7"/>
<dbReference type="KEGG" id="aeh:Mlg_1451"/>
<dbReference type="eggNOG" id="COG0482">
    <property type="taxonomic scope" value="Bacteria"/>
</dbReference>
<dbReference type="HOGENOM" id="CLU_035188_1_0_6"/>
<dbReference type="OrthoDB" id="9800696at2"/>
<dbReference type="Proteomes" id="UP000001962">
    <property type="component" value="Chromosome"/>
</dbReference>
<dbReference type="GO" id="GO:0005737">
    <property type="term" value="C:cytoplasm"/>
    <property type="evidence" value="ECO:0007669"/>
    <property type="project" value="UniProtKB-SubCell"/>
</dbReference>
<dbReference type="GO" id="GO:0005524">
    <property type="term" value="F:ATP binding"/>
    <property type="evidence" value="ECO:0007669"/>
    <property type="project" value="UniProtKB-KW"/>
</dbReference>
<dbReference type="GO" id="GO:0000049">
    <property type="term" value="F:tRNA binding"/>
    <property type="evidence" value="ECO:0007669"/>
    <property type="project" value="UniProtKB-KW"/>
</dbReference>
<dbReference type="GO" id="GO:0103016">
    <property type="term" value="F:tRNA-uridine 2-sulfurtransferase activity"/>
    <property type="evidence" value="ECO:0007669"/>
    <property type="project" value="UniProtKB-EC"/>
</dbReference>
<dbReference type="GO" id="GO:0002143">
    <property type="term" value="P:tRNA wobble position uridine thiolation"/>
    <property type="evidence" value="ECO:0007669"/>
    <property type="project" value="TreeGrafter"/>
</dbReference>
<dbReference type="CDD" id="cd01998">
    <property type="entry name" value="MnmA_TRMU-like"/>
    <property type="match status" value="1"/>
</dbReference>
<dbReference type="FunFam" id="2.30.30.280:FF:000001">
    <property type="entry name" value="tRNA-specific 2-thiouridylase MnmA"/>
    <property type="match status" value="1"/>
</dbReference>
<dbReference type="FunFam" id="2.40.30.10:FF:000023">
    <property type="entry name" value="tRNA-specific 2-thiouridylase MnmA"/>
    <property type="match status" value="1"/>
</dbReference>
<dbReference type="Gene3D" id="2.30.30.280">
    <property type="entry name" value="Adenine nucleotide alpha hydrolases-like domains"/>
    <property type="match status" value="1"/>
</dbReference>
<dbReference type="Gene3D" id="3.40.50.620">
    <property type="entry name" value="HUPs"/>
    <property type="match status" value="1"/>
</dbReference>
<dbReference type="Gene3D" id="2.40.30.10">
    <property type="entry name" value="Translation factors"/>
    <property type="match status" value="1"/>
</dbReference>
<dbReference type="HAMAP" id="MF_00144">
    <property type="entry name" value="tRNA_thiouridyl_MnmA"/>
    <property type="match status" value="1"/>
</dbReference>
<dbReference type="InterPro" id="IPR004506">
    <property type="entry name" value="MnmA-like"/>
</dbReference>
<dbReference type="InterPro" id="IPR046885">
    <property type="entry name" value="MnmA-like_C"/>
</dbReference>
<dbReference type="InterPro" id="IPR046884">
    <property type="entry name" value="MnmA-like_central"/>
</dbReference>
<dbReference type="InterPro" id="IPR023382">
    <property type="entry name" value="MnmA-like_central_sf"/>
</dbReference>
<dbReference type="InterPro" id="IPR014729">
    <property type="entry name" value="Rossmann-like_a/b/a_fold"/>
</dbReference>
<dbReference type="NCBIfam" id="NF001138">
    <property type="entry name" value="PRK00143.1"/>
    <property type="match status" value="1"/>
</dbReference>
<dbReference type="NCBIfam" id="TIGR00420">
    <property type="entry name" value="trmU"/>
    <property type="match status" value="1"/>
</dbReference>
<dbReference type="PANTHER" id="PTHR11933:SF5">
    <property type="entry name" value="MITOCHONDRIAL TRNA-SPECIFIC 2-THIOURIDYLASE 1"/>
    <property type="match status" value="1"/>
</dbReference>
<dbReference type="PANTHER" id="PTHR11933">
    <property type="entry name" value="TRNA 5-METHYLAMINOMETHYL-2-THIOURIDYLATE -METHYLTRANSFERASE"/>
    <property type="match status" value="1"/>
</dbReference>
<dbReference type="Pfam" id="PF03054">
    <property type="entry name" value="tRNA_Me_trans"/>
    <property type="match status" value="1"/>
</dbReference>
<dbReference type="Pfam" id="PF20258">
    <property type="entry name" value="tRNA_Me_trans_C"/>
    <property type="match status" value="1"/>
</dbReference>
<dbReference type="Pfam" id="PF20259">
    <property type="entry name" value="tRNA_Me_trans_M"/>
    <property type="match status" value="1"/>
</dbReference>
<dbReference type="SUPFAM" id="SSF52402">
    <property type="entry name" value="Adenine nucleotide alpha hydrolases-like"/>
    <property type="match status" value="1"/>
</dbReference>
<gene>
    <name evidence="1" type="primary">mnmA</name>
    <name type="ordered locus">Mlg_1451</name>
</gene>
<accession>Q0A8N7</accession>
<evidence type="ECO:0000255" key="1">
    <source>
        <dbReference type="HAMAP-Rule" id="MF_00144"/>
    </source>
</evidence>
<proteinExistence type="inferred from homology"/>
<sequence length="366" mass="40095">MGKTDKVVVGLSGGVDSAVAAMRLLEAGHHVEGLFMKNWEDDDTLTHCAAEEDLAEAQAVADHLGIRLHRANFAARYREQVFEVCLREYRAGRTPNPDILCNQRIKFRAFLDHALSLGASKVATGHYAGVGEQGGRFTLLRGEDPHKDQSYFLYTLGQAQLRHSLFPLSELPKPEVRRQAAAAGLPNHARRDSTGICFIGERDFRAFLSRYIQRSPGPMETPEGQVVGEHQGLAFYTLGQRRGLGLGGLPDHDEGAWYVADKDMARNALIVVQGHAHPRLLSTALVADELSWVAGAPPTLPLRCTVKSRYRQQDQPCALEAGPSPTSVVVRFDTPQRAVTPGQSVVFYQGRVCLGGGIIQTRTPVE</sequence>
<name>MNMA_ALKEH</name>
<feature type="chain" id="PRO_0000349506" description="tRNA-specific 2-thiouridylase MnmA">
    <location>
        <begin position="1"/>
        <end position="366"/>
    </location>
</feature>
<feature type="region of interest" description="Interaction with target base in tRNA" evidence="1">
    <location>
        <begin position="96"/>
        <end position="98"/>
    </location>
</feature>
<feature type="region of interest" description="Interaction with tRNA" evidence="1">
    <location>
        <begin position="147"/>
        <end position="149"/>
    </location>
</feature>
<feature type="region of interest" description="Interaction with tRNA" evidence="1">
    <location>
        <begin position="309"/>
        <end position="310"/>
    </location>
</feature>
<feature type="active site" description="Nucleophile" evidence="1">
    <location>
        <position position="101"/>
    </location>
</feature>
<feature type="active site" description="Cysteine persulfide intermediate" evidence="1">
    <location>
        <position position="197"/>
    </location>
</feature>
<feature type="binding site" evidence="1">
    <location>
        <begin position="10"/>
        <end position="17"/>
    </location>
    <ligand>
        <name>ATP</name>
        <dbReference type="ChEBI" id="CHEBI:30616"/>
    </ligand>
</feature>
<feature type="binding site" evidence="1">
    <location>
        <position position="36"/>
    </location>
    <ligand>
        <name>ATP</name>
        <dbReference type="ChEBI" id="CHEBI:30616"/>
    </ligand>
</feature>
<feature type="binding site" evidence="1">
    <location>
        <position position="125"/>
    </location>
    <ligand>
        <name>ATP</name>
        <dbReference type="ChEBI" id="CHEBI:30616"/>
    </ligand>
</feature>
<feature type="site" description="Interaction with tRNA" evidence="1">
    <location>
        <position position="126"/>
    </location>
</feature>
<feature type="site" description="Interaction with tRNA" evidence="1">
    <location>
        <position position="343"/>
    </location>
</feature>
<feature type="disulfide bond" description="Alternate" evidence="1">
    <location>
        <begin position="101"/>
        <end position="197"/>
    </location>
</feature>
<protein>
    <recommendedName>
        <fullName evidence="1">tRNA-specific 2-thiouridylase MnmA</fullName>
        <ecNumber evidence="1">2.8.1.13</ecNumber>
    </recommendedName>
</protein>
<reference key="1">
    <citation type="submission" date="2006-08" db="EMBL/GenBank/DDBJ databases">
        <title>Complete sequence of Alkalilimnicola ehrilichei MLHE-1.</title>
        <authorList>
            <person name="Copeland A."/>
            <person name="Lucas S."/>
            <person name="Lapidus A."/>
            <person name="Barry K."/>
            <person name="Detter J.C."/>
            <person name="Glavina del Rio T."/>
            <person name="Hammon N."/>
            <person name="Israni S."/>
            <person name="Dalin E."/>
            <person name="Tice H."/>
            <person name="Pitluck S."/>
            <person name="Sims D."/>
            <person name="Brettin T."/>
            <person name="Bruce D."/>
            <person name="Han C."/>
            <person name="Tapia R."/>
            <person name="Gilna P."/>
            <person name="Schmutz J."/>
            <person name="Larimer F."/>
            <person name="Land M."/>
            <person name="Hauser L."/>
            <person name="Kyrpides N."/>
            <person name="Mikhailova N."/>
            <person name="Oremland R.S."/>
            <person name="Hoeft S.E."/>
            <person name="Switzer-Blum J."/>
            <person name="Kulp T."/>
            <person name="King G."/>
            <person name="Tabita R."/>
            <person name="Witte B."/>
            <person name="Santini J.M."/>
            <person name="Basu P."/>
            <person name="Hollibaugh J.T."/>
            <person name="Xie G."/>
            <person name="Stolz J.F."/>
            <person name="Richardson P."/>
        </authorList>
    </citation>
    <scope>NUCLEOTIDE SEQUENCE [LARGE SCALE GENOMIC DNA]</scope>
    <source>
        <strain>ATCC BAA-1101 / DSM 17681 / MLHE-1</strain>
    </source>
</reference>